<evidence type="ECO:0000255" key="1">
    <source>
        <dbReference type="HAMAP-Rule" id="MF_00071"/>
    </source>
</evidence>
<evidence type="ECO:0000305" key="2"/>
<feature type="chain" id="PRO_0000176239" description="Elongation factor 4">
    <location>
        <begin position="1"/>
        <end position="606"/>
    </location>
</feature>
<feature type="domain" description="tr-type G">
    <location>
        <begin position="10"/>
        <end position="192"/>
    </location>
</feature>
<feature type="binding site" evidence="1">
    <location>
        <begin position="22"/>
        <end position="27"/>
    </location>
    <ligand>
        <name>GTP</name>
        <dbReference type="ChEBI" id="CHEBI:37565"/>
    </ligand>
</feature>
<feature type="binding site" evidence="1">
    <location>
        <begin position="139"/>
        <end position="142"/>
    </location>
    <ligand>
        <name>GTP</name>
        <dbReference type="ChEBI" id="CHEBI:37565"/>
    </ligand>
</feature>
<gene>
    <name evidence="1" type="primary">lepA</name>
    <name type="ordered locus">BB_0088</name>
</gene>
<sequence length="606" mass="68173">MVQGGSSISIRKKNFCIIAHIDHGKSTLADRFIQKAKIISDRDFKSQMLDSMDIERERGITIKSQAVTITYKSNDGDFYELNFVDTPGHVDFSYEVSRAISSCEGALLLIDASQGIQAQTVSNFYMAFEHDLEIIPVINKIDLPNANVDFVKKQIKNDLGLNEEIAISISAKNGIGIDDLLEAICKYVPSPRGSIKDPLRALIFDSHYDSYRGVVVHFRIFEGQIKMGDKIRLMHTNSEHLIEEIGIFKISLERKDTLEAGDVGYFIAGIKNISDVKIGDTVTLCDFPALSPLEGFKEVKPVVFSSVYPVDANQYDDLLKAMDRLKLNDASLTFEKDSSSALGHGFKCGFLGLLHLEVIQERIEREFNLNVILTSPSVRYKIIPKKGESYFIETPEQFPGNEAIESVLEPYIKANIIVPTEFLGNIMSVCLLKRGVQTNLIYLDTKRVELIYKMPLSEILFDFYDKIKSVSRGYASFDYELLDYEYTDLVRLDILVNGDRVDALSQLVFKDSARTKAIGICKKLKDEIARQQFRIAIQGAIGSNVIARETISPVRKDVTAKCYGGDITRKRKLLEKQKEGKKRMKMVGNVEIPQSAFLAVLKSNDN</sequence>
<name>LEPA_BORBU</name>
<accession>O51115</accession>
<reference key="1">
    <citation type="journal article" date="1997" name="Nature">
        <title>Genomic sequence of a Lyme disease spirochaete, Borrelia burgdorferi.</title>
        <authorList>
            <person name="Fraser C.M."/>
            <person name="Casjens S."/>
            <person name="Huang W.M."/>
            <person name="Sutton G.G."/>
            <person name="Clayton R.A."/>
            <person name="Lathigra R."/>
            <person name="White O."/>
            <person name="Ketchum K.A."/>
            <person name="Dodson R.J."/>
            <person name="Hickey E.K."/>
            <person name="Gwinn M.L."/>
            <person name="Dougherty B.A."/>
            <person name="Tomb J.-F."/>
            <person name="Fleischmann R.D."/>
            <person name="Richardson D.L."/>
            <person name="Peterson J.D."/>
            <person name="Kerlavage A.R."/>
            <person name="Quackenbush J."/>
            <person name="Salzberg S.L."/>
            <person name="Hanson M."/>
            <person name="van Vugt R."/>
            <person name="Palmer N."/>
            <person name="Adams M.D."/>
            <person name="Gocayne J.D."/>
            <person name="Weidman J.F."/>
            <person name="Utterback T.R."/>
            <person name="Watthey L."/>
            <person name="McDonald L.A."/>
            <person name="Artiach P."/>
            <person name="Bowman C."/>
            <person name="Garland S.A."/>
            <person name="Fujii C."/>
            <person name="Cotton M.D."/>
            <person name="Horst K."/>
            <person name="Roberts K.M."/>
            <person name="Hatch B."/>
            <person name="Smith H.O."/>
            <person name="Venter J.C."/>
        </authorList>
    </citation>
    <scope>NUCLEOTIDE SEQUENCE [LARGE SCALE GENOMIC DNA]</scope>
    <source>
        <strain>ATCC 35210 / DSM 4680 / CIP 102532 / B31</strain>
    </source>
</reference>
<comment type="function">
    <text evidence="1">Required for accurate and efficient protein synthesis under certain stress conditions. May act as a fidelity factor of the translation reaction, by catalyzing a one-codon backward translocation of tRNAs on improperly translocated ribosomes. Back-translocation proceeds from a post-translocation (POST) complex to a pre-translocation (PRE) complex, thus giving elongation factor G a second chance to translocate the tRNAs correctly. Binds to ribosomes in a GTP-dependent manner.</text>
</comment>
<comment type="catalytic activity">
    <reaction evidence="1">
        <text>GTP + H2O = GDP + phosphate + H(+)</text>
        <dbReference type="Rhea" id="RHEA:19669"/>
        <dbReference type="ChEBI" id="CHEBI:15377"/>
        <dbReference type="ChEBI" id="CHEBI:15378"/>
        <dbReference type="ChEBI" id="CHEBI:37565"/>
        <dbReference type="ChEBI" id="CHEBI:43474"/>
        <dbReference type="ChEBI" id="CHEBI:58189"/>
        <dbReference type="EC" id="3.6.5.n1"/>
    </reaction>
</comment>
<comment type="subcellular location">
    <subcellularLocation>
        <location evidence="1">Cell inner membrane</location>
        <topology evidence="1">Peripheral membrane protein</topology>
        <orientation evidence="1">Cytoplasmic side</orientation>
    </subcellularLocation>
</comment>
<comment type="similarity">
    <text evidence="1">Belongs to the TRAFAC class translation factor GTPase superfamily. Classic translation factor GTPase family. LepA subfamily.</text>
</comment>
<comment type="sequence caution" evidence="2">
    <conflict type="erroneous initiation">
        <sequence resource="EMBL-CDS" id="AAC66469"/>
    </conflict>
</comment>
<proteinExistence type="inferred from homology"/>
<keyword id="KW-0997">Cell inner membrane</keyword>
<keyword id="KW-1003">Cell membrane</keyword>
<keyword id="KW-0342">GTP-binding</keyword>
<keyword id="KW-0378">Hydrolase</keyword>
<keyword id="KW-0472">Membrane</keyword>
<keyword id="KW-0547">Nucleotide-binding</keyword>
<keyword id="KW-0648">Protein biosynthesis</keyword>
<keyword id="KW-1185">Reference proteome</keyword>
<organism>
    <name type="scientific">Borreliella burgdorferi (strain ATCC 35210 / DSM 4680 / CIP 102532 / B31)</name>
    <name type="common">Borrelia burgdorferi</name>
    <dbReference type="NCBI Taxonomy" id="224326"/>
    <lineage>
        <taxon>Bacteria</taxon>
        <taxon>Pseudomonadati</taxon>
        <taxon>Spirochaetota</taxon>
        <taxon>Spirochaetia</taxon>
        <taxon>Spirochaetales</taxon>
        <taxon>Borreliaceae</taxon>
        <taxon>Borreliella</taxon>
    </lineage>
</organism>
<protein>
    <recommendedName>
        <fullName evidence="1">Elongation factor 4</fullName>
        <shortName evidence="1">EF-4</shortName>
        <ecNumber evidence="1">3.6.5.n1</ecNumber>
    </recommendedName>
    <alternativeName>
        <fullName evidence="1">Ribosomal back-translocase LepA</fullName>
    </alternativeName>
</protein>
<dbReference type="EC" id="3.6.5.n1" evidence="1"/>
<dbReference type="EMBL" id="AE000783">
    <property type="protein sequence ID" value="AAC66469.1"/>
    <property type="status" value="ALT_INIT"/>
    <property type="molecule type" value="Genomic_DNA"/>
</dbReference>
<dbReference type="PIR" id="H70110">
    <property type="entry name" value="H70110"/>
</dbReference>
<dbReference type="RefSeq" id="NP_212222.1">
    <property type="nucleotide sequence ID" value="NC_001318.1"/>
</dbReference>
<dbReference type="SMR" id="O51115"/>
<dbReference type="STRING" id="224326.BB_0088"/>
<dbReference type="PaxDb" id="224326-BB_0088"/>
<dbReference type="EnsemblBacteria" id="AAC66469">
    <property type="protein sequence ID" value="AAC66469"/>
    <property type="gene ID" value="BB_0088"/>
</dbReference>
<dbReference type="KEGG" id="bbu:BB_0088"/>
<dbReference type="PATRIC" id="fig|224326.49.peg.486"/>
<dbReference type="HOGENOM" id="CLU_009995_3_3_12"/>
<dbReference type="OrthoDB" id="9804431at2"/>
<dbReference type="Proteomes" id="UP000001807">
    <property type="component" value="Chromosome"/>
</dbReference>
<dbReference type="GO" id="GO:0005886">
    <property type="term" value="C:plasma membrane"/>
    <property type="evidence" value="ECO:0007669"/>
    <property type="project" value="UniProtKB-SubCell"/>
</dbReference>
<dbReference type="GO" id="GO:0005525">
    <property type="term" value="F:GTP binding"/>
    <property type="evidence" value="ECO:0007669"/>
    <property type="project" value="UniProtKB-UniRule"/>
</dbReference>
<dbReference type="GO" id="GO:0003924">
    <property type="term" value="F:GTPase activity"/>
    <property type="evidence" value="ECO:0007669"/>
    <property type="project" value="UniProtKB-UniRule"/>
</dbReference>
<dbReference type="GO" id="GO:0043022">
    <property type="term" value="F:ribosome binding"/>
    <property type="evidence" value="ECO:0007669"/>
    <property type="project" value="UniProtKB-UniRule"/>
</dbReference>
<dbReference type="GO" id="GO:0003746">
    <property type="term" value="F:translation elongation factor activity"/>
    <property type="evidence" value="ECO:0007669"/>
    <property type="project" value="UniProtKB-UniRule"/>
</dbReference>
<dbReference type="GO" id="GO:0045727">
    <property type="term" value="P:positive regulation of translation"/>
    <property type="evidence" value="ECO:0007669"/>
    <property type="project" value="UniProtKB-UniRule"/>
</dbReference>
<dbReference type="CDD" id="cd03699">
    <property type="entry name" value="EF4_II"/>
    <property type="match status" value="1"/>
</dbReference>
<dbReference type="CDD" id="cd16260">
    <property type="entry name" value="EF4_III"/>
    <property type="match status" value="1"/>
</dbReference>
<dbReference type="CDD" id="cd01890">
    <property type="entry name" value="LepA"/>
    <property type="match status" value="1"/>
</dbReference>
<dbReference type="CDD" id="cd03709">
    <property type="entry name" value="lepA_C"/>
    <property type="match status" value="1"/>
</dbReference>
<dbReference type="FunFam" id="3.40.50.300:FF:000078">
    <property type="entry name" value="Elongation factor 4"/>
    <property type="match status" value="1"/>
</dbReference>
<dbReference type="FunFam" id="2.40.30.10:FF:000015">
    <property type="entry name" value="Translation factor GUF1, mitochondrial"/>
    <property type="match status" value="1"/>
</dbReference>
<dbReference type="FunFam" id="3.30.70.240:FF:000007">
    <property type="entry name" value="Translation factor GUF1, mitochondrial"/>
    <property type="match status" value="1"/>
</dbReference>
<dbReference type="FunFam" id="3.30.70.2570:FF:000001">
    <property type="entry name" value="Translation factor GUF1, mitochondrial"/>
    <property type="match status" value="1"/>
</dbReference>
<dbReference type="FunFam" id="3.30.70.870:FF:000004">
    <property type="entry name" value="Translation factor GUF1, mitochondrial"/>
    <property type="match status" value="1"/>
</dbReference>
<dbReference type="Gene3D" id="3.30.70.240">
    <property type="match status" value="1"/>
</dbReference>
<dbReference type="Gene3D" id="3.30.70.2570">
    <property type="entry name" value="Elongation factor 4, C-terminal domain"/>
    <property type="match status" value="1"/>
</dbReference>
<dbReference type="Gene3D" id="3.30.70.870">
    <property type="entry name" value="Elongation Factor G (Translational Gtpase), domain 3"/>
    <property type="match status" value="1"/>
</dbReference>
<dbReference type="Gene3D" id="3.40.50.300">
    <property type="entry name" value="P-loop containing nucleotide triphosphate hydrolases"/>
    <property type="match status" value="1"/>
</dbReference>
<dbReference type="Gene3D" id="2.40.30.10">
    <property type="entry name" value="Translation factors"/>
    <property type="match status" value="1"/>
</dbReference>
<dbReference type="HAMAP" id="MF_00071">
    <property type="entry name" value="LepA"/>
    <property type="match status" value="1"/>
</dbReference>
<dbReference type="InterPro" id="IPR006297">
    <property type="entry name" value="EF-4"/>
</dbReference>
<dbReference type="InterPro" id="IPR041095">
    <property type="entry name" value="EFG_II"/>
</dbReference>
<dbReference type="InterPro" id="IPR035647">
    <property type="entry name" value="EFG_III/V"/>
</dbReference>
<dbReference type="InterPro" id="IPR000640">
    <property type="entry name" value="EFG_V-like"/>
</dbReference>
<dbReference type="InterPro" id="IPR004161">
    <property type="entry name" value="EFTu-like_2"/>
</dbReference>
<dbReference type="InterPro" id="IPR031157">
    <property type="entry name" value="G_TR_CS"/>
</dbReference>
<dbReference type="InterPro" id="IPR038363">
    <property type="entry name" value="LepA_C_sf"/>
</dbReference>
<dbReference type="InterPro" id="IPR013842">
    <property type="entry name" value="LepA_CTD"/>
</dbReference>
<dbReference type="InterPro" id="IPR035654">
    <property type="entry name" value="LepA_IV"/>
</dbReference>
<dbReference type="InterPro" id="IPR027417">
    <property type="entry name" value="P-loop_NTPase"/>
</dbReference>
<dbReference type="InterPro" id="IPR005225">
    <property type="entry name" value="Small_GTP-bd"/>
</dbReference>
<dbReference type="InterPro" id="IPR000795">
    <property type="entry name" value="T_Tr_GTP-bd_dom"/>
</dbReference>
<dbReference type="NCBIfam" id="TIGR01393">
    <property type="entry name" value="lepA"/>
    <property type="match status" value="1"/>
</dbReference>
<dbReference type="NCBIfam" id="TIGR00231">
    <property type="entry name" value="small_GTP"/>
    <property type="match status" value="1"/>
</dbReference>
<dbReference type="PANTHER" id="PTHR43512:SF4">
    <property type="entry name" value="TRANSLATION FACTOR GUF1 HOMOLOG, CHLOROPLASTIC"/>
    <property type="match status" value="1"/>
</dbReference>
<dbReference type="PANTHER" id="PTHR43512">
    <property type="entry name" value="TRANSLATION FACTOR GUF1-RELATED"/>
    <property type="match status" value="1"/>
</dbReference>
<dbReference type="Pfam" id="PF00679">
    <property type="entry name" value="EFG_C"/>
    <property type="match status" value="1"/>
</dbReference>
<dbReference type="Pfam" id="PF14492">
    <property type="entry name" value="EFG_III"/>
    <property type="match status" value="1"/>
</dbReference>
<dbReference type="Pfam" id="PF00009">
    <property type="entry name" value="GTP_EFTU"/>
    <property type="match status" value="1"/>
</dbReference>
<dbReference type="Pfam" id="PF03144">
    <property type="entry name" value="GTP_EFTU_D2"/>
    <property type="match status" value="1"/>
</dbReference>
<dbReference type="Pfam" id="PF06421">
    <property type="entry name" value="LepA_C"/>
    <property type="match status" value="1"/>
</dbReference>
<dbReference type="PRINTS" id="PR00315">
    <property type="entry name" value="ELONGATNFCT"/>
</dbReference>
<dbReference type="SMART" id="SM00838">
    <property type="entry name" value="EFG_C"/>
    <property type="match status" value="1"/>
</dbReference>
<dbReference type="SUPFAM" id="SSF54980">
    <property type="entry name" value="EF-G C-terminal domain-like"/>
    <property type="match status" value="2"/>
</dbReference>
<dbReference type="SUPFAM" id="SSF52540">
    <property type="entry name" value="P-loop containing nucleoside triphosphate hydrolases"/>
    <property type="match status" value="1"/>
</dbReference>
<dbReference type="PROSITE" id="PS00301">
    <property type="entry name" value="G_TR_1"/>
    <property type="match status" value="1"/>
</dbReference>
<dbReference type="PROSITE" id="PS51722">
    <property type="entry name" value="G_TR_2"/>
    <property type="match status" value="1"/>
</dbReference>